<keyword id="KW-0963">Cytoplasm</keyword>
<keyword id="KW-0269">Exonuclease</keyword>
<keyword id="KW-0378">Hydrolase</keyword>
<keyword id="KW-0540">Nuclease</keyword>
<keyword id="KW-1185">Reference proteome</keyword>
<gene>
    <name evidence="1" type="primary">orn</name>
    <name type="ordered locus">AZOSEA29540</name>
    <name type="ORF">ebA5206</name>
</gene>
<sequence length="183" mass="20998">MAQDQNHLIWLDMEMTGLQPDSDRIIEIAIVITDSQLNTVAEAPVIAVHQPDSVLDAMDEWNRNTHGKSGLTDRVKASLIGEADAEAQMLAFLQQHVPAHTSPMCGNSICQDRRFMARYMPHLEAWFHYRNLDVSTLKELAKRWRPEVYKGVEKKGKHEALADIRESIAELRHYRDNFLRLVP</sequence>
<proteinExistence type="inferred from homology"/>
<feature type="chain" id="PRO_0000111017" description="Oligoribonuclease">
    <location>
        <begin position="1"/>
        <end position="183"/>
    </location>
</feature>
<feature type="domain" description="Exonuclease" evidence="1">
    <location>
        <begin position="8"/>
        <end position="171"/>
    </location>
</feature>
<feature type="active site" evidence="1">
    <location>
        <position position="129"/>
    </location>
</feature>
<dbReference type="EC" id="3.1.15.-" evidence="1"/>
<dbReference type="EMBL" id="CR555306">
    <property type="protein sequence ID" value="CAI09079.1"/>
    <property type="molecule type" value="Genomic_DNA"/>
</dbReference>
<dbReference type="RefSeq" id="WP_011238760.1">
    <property type="nucleotide sequence ID" value="NC_006513.1"/>
</dbReference>
<dbReference type="SMR" id="Q5P0T5"/>
<dbReference type="STRING" id="76114.ebA5206"/>
<dbReference type="KEGG" id="eba:ebA5206"/>
<dbReference type="eggNOG" id="COG1949">
    <property type="taxonomic scope" value="Bacteria"/>
</dbReference>
<dbReference type="HOGENOM" id="CLU_064761_2_0_4"/>
<dbReference type="OrthoDB" id="9801329at2"/>
<dbReference type="Proteomes" id="UP000006552">
    <property type="component" value="Chromosome"/>
</dbReference>
<dbReference type="GO" id="GO:0005737">
    <property type="term" value="C:cytoplasm"/>
    <property type="evidence" value="ECO:0007669"/>
    <property type="project" value="UniProtKB-SubCell"/>
</dbReference>
<dbReference type="GO" id="GO:0000175">
    <property type="term" value="F:3'-5'-RNA exonuclease activity"/>
    <property type="evidence" value="ECO:0007669"/>
    <property type="project" value="InterPro"/>
</dbReference>
<dbReference type="GO" id="GO:0003676">
    <property type="term" value="F:nucleic acid binding"/>
    <property type="evidence" value="ECO:0007669"/>
    <property type="project" value="InterPro"/>
</dbReference>
<dbReference type="GO" id="GO:0006259">
    <property type="term" value="P:DNA metabolic process"/>
    <property type="evidence" value="ECO:0007669"/>
    <property type="project" value="UniProtKB-ARBA"/>
</dbReference>
<dbReference type="CDD" id="cd06135">
    <property type="entry name" value="Orn"/>
    <property type="match status" value="1"/>
</dbReference>
<dbReference type="FunFam" id="3.30.420.10:FF:000003">
    <property type="entry name" value="Oligoribonuclease"/>
    <property type="match status" value="1"/>
</dbReference>
<dbReference type="Gene3D" id="3.30.420.10">
    <property type="entry name" value="Ribonuclease H-like superfamily/Ribonuclease H"/>
    <property type="match status" value="1"/>
</dbReference>
<dbReference type="HAMAP" id="MF_00045">
    <property type="entry name" value="Oligoribonuclease"/>
    <property type="match status" value="1"/>
</dbReference>
<dbReference type="InterPro" id="IPR013520">
    <property type="entry name" value="Exonuclease_RNaseT/DNA_pol3"/>
</dbReference>
<dbReference type="InterPro" id="IPR022894">
    <property type="entry name" value="Oligoribonuclease"/>
</dbReference>
<dbReference type="InterPro" id="IPR012337">
    <property type="entry name" value="RNaseH-like_sf"/>
</dbReference>
<dbReference type="InterPro" id="IPR036397">
    <property type="entry name" value="RNaseH_sf"/>
</dbReference>
<dbReference type="NCBIfam" id="NF003765">
    <property type="entry name" value="PRK05359.1"/>
    <property type="match status" value="1"/>
</dbReference>
<dbReference type="PANTHER" id="PTHR11046">
    <property type="entry name" value="OLIGORIBONUCLEASE, MITOCHONDRIAL"/>
    <property type="match status" value="1"/>
</dbReference>
<dbReference type="PANTHER" id="PTHR11046:SF0">
    <property type="entry name" value="OLIGORIBONUCLEASE, MITOCHONDRIAL"/>
    <property type="match status" value="1"/>
</dbReference>
<dbReference type="Pfam" id="PF00929">
    <property type="entry name" value="RNase_T"/>
    <property type="match status" value="1"/>
</dbReference>
<dbReference type="SMART" id="SM00479">
    <property type="entry name" value="EXOIII"/>
    <property type="match status" value="1"/>
</dbReference>
<dbReference type="SUPFAM" id="SSF53098">
    <property type="entry name" value="Ribonuclease H-like"/>
    <property type="match status" value="1"/>
</dbReference>
<evidence type="ECO:0000255" key="1">
    <source>
        <dbReference type="HAMAP-Rule" id="MF_00045"/>
    </source>
</evidence>
<protein>
    <recommendedName>
        <fullName evidence="1">Oligoribonuclease</fullName>
        <ecNumber evidence="1">3.1.15.-</ecNumber>
    </recommendedName>
</protein>
<reference key="1">
    <citation type="journal article" date="2005" name="Arch. Microbiol.">
        <title>The genome sequence of an anaerobic aromatic-degrading denitrifying bacterium, strain EbN1.</title>
        <authorList>
            <person name="Rabus R."/>
            <person name="Kube M."/>
            <person name="Heider J."/>
            <person name="Beck A."/>
            <person name="Heitmann K."/>
            <person name="Widdel F."/>
            <person name="Reinhardt R."/>
        </authorList>
    </citation>
    <scope>NUCLEOTIDE SEQUENCE [LARGE SCALE GENOMIC DNA]</scope>
    <source>
        <strain>DSM 19018 / LMG 30748 / EbN1</strain>
    </source>
</reference>
<comment type="function">
    <text evidence="1">3'-to-5' exoribonuclease specific for small oligoribonucleotides.</text>
</comment>
<comment type="subcellular location">
    <subcellularLocation>
        <location evidence="1">Cytoplasm</location>
    </subcellularLocation>
</comment>
<comment type="similarity">
    <text evidence="1">Belongs to the oligoribonuclease family.</text>
</comment>
<accession>Q5P0T5</accession>
<name>ORN_AROAE</name>
<organism>
    <name type="scientific">Aromatoleum aromaticum (strain DSM 19018 / LMG 30748 / EbN1)</name>
    <name type="common">Azoarcus sp. (strain EbN1)</name>
    <dbReference type="NCBI Taxonomy" id="76114"/>
    <lineage>
        <taxon>Bacteria</taxon>
        <taxon>Pseudomonadati</taxon>
        <taxon>Pseudomonadota</taxon>
        <taxon>Betaproteobacteria</taxon>
        <taxon>Rhodocyclales</taxon>
        <taxon>Rhodocyclaceae</taxon>
        <taxon>Aromatoleum</taxon>
    </lineage>
</organism>